<accession>A0A1L8GUX5</accession>
<reference evidence="7" key="1">
    <citation type="journal article" date="2016" name="Nature">
        <title>Genome evolution in the allotetraploid frog Xenopus laevis.</title>
        <authorList>
            <person name="Session A.M."/>
            <person name="Uno Y."/>
            <person name="Kwon T."/>
            <person name="Chapman J.A."/>
            <person name="Toyoda A."/>
            <person name="Takahashi S."/>
            <person name="Fukui A."/>
            <person name="Hikosaka A."/>
            <person name="Suzuki A."/>
            <person name="Kondo M."/>
            <person name="van Heeringen S.J."/>
            <person name="Quigley I."/>
            <person name="Heinz S."/>
            <person name="Ogino H."/>
            <person name="Ochi H."/>
            <person name="Hellsten U."/>
            <person name="Lyons J.B."/>
            <person name="Simakov O."/>
            <person name="Putnam N."/>
            <person name="Stites J."/>
            <person name="Kuroki Y."/>
            <person name="Tanaka T."/>
            <person name="Michiue T."/>
            <person name="Watanabe M."/>
            <person name="Bogdanovic O."/>
            <person name="Lister R."/>
            <person name="Georgiou G."/>
            <person name="Paranjpe S.S."/>
            <person name="van Kruijsbergen I."/>
            <person name="Shu S."/>
            <person name="Carlson J."/>
            <person name="Kinoshita T."/>
            <person name="Ohta Y."/>
            <person name="Mawaribuchi S."/>
            <person name="Jenkins J."/>
            <person name="Grimwood J."/>
            <person name="Schmutz J."/>
            <person name="Mitros T."/>
            <person name="Mozaffari S.V."/>
            <person name="Suzuki Y."/>
            <person name="Haramoto Y."/>
            <person name="Yamamoto T.S."/>
            <person name="Takagi C."/>
            <person name="Heald R."/>
            <person name="Miller K."/>
            <person name="Haudenschild C."/>
            <person name="Kitzman J."/>
            <person name="Nakayama T."/>
            <person name="Izutsu Y."/>
            <person name="Robert J."/>
            <person name="Fortriede J."/>
            <person name="Burns K."/>
            <person name="Lotay V."/>
            <person name="Karimi K."/>
            <person name="Yasuoka Y."/>
            <person name="Dichmann D.S."/>
            <person name="Flajnik M.F."/>
            <person name="Houston D.W."/>
            <person name="Shendure J."/>
            <person name="DuPasquier L."/>
            <person name="Vize P.D."/>
            <person name="Zorn A.M."/>
            <person name="Ito M."/>
            <person name="Marcotte E.M."/>
            <person name="Wallingford J.B."/>
            <person name="Ito Y."/>
            <person name="Asashima M."/>
            <person name="Ueno N."/>
            <person name="Matsuda Y."/>
            <person name="Veenstra G.J."/>
            <person name="Fujiyama A."/>
            <person name="Harland R.M."/>
            <person name="Taira M."/>
            <person name="Rokhsar D.S."/>
        </authorList>
    </citation>
    <scope>NUCLEOTIDE SEQUENCE [LARGE SCALE GENOMIC DNA]</scope>
    <source>
        <strain evidence="7">J</strain>
    </source>
</reference>
<reference evidence="6" key="2">
    <citation type="journal article" date="2013" name="Neural Dev.">
        <title>The Nedd4-binding protein 3 (N4BP3) is crucial for axonal and dendritic branching in developing neurons.</title>
        <authorList>
            <person name="Schmeisser M.J."/>
            <person name="Kuehl S.J."/>
            <person name="Schoen M."/>
            <person name="Beth N.H."/>
            <person name="Weis T.M."/>
            <person name="Grabrucker A.M."/>
            <person name="Kuehl M."/>
            <person name="Boeckers T.M."/>
        </authorList>
    </citation>
    <scope>FUNCTION</scope>
    <scope>DEVELOPMENTAL STAGE</scope>
    <scope>DISRUPTION PHENOTYPE</scope>
</reference>
<reference evidence="6" key="3">
    <citation type="journal article" date="2017" name="Dev. Biol.">
        <title>The Nedd4 binding protein 3 is required for anterior neural development in Xenopus laevis.</title>
        <authorList>
            <person name="Kiem L.M."/>
            <person name="Dietmann P."/>
            <person name="Linnemann A."/>
            <person name="Schmeisser M.J."/>
            <person name="Kuehl S.J."/>
        </authorList>
    </citation>
    <scope>FUNCTION</scope>
    <scope>DEVELOPMENTAL STAGE</scope>
    <scope>DISRUPTION PHENOTYPE</scope>
</reference>
<gene>
    <name evidence="6" type="primary">n4bp3-b</name>
</gene>
<protein>
    <recommendedName>
        <fullName evidence="6">NEDD4-binding protein 3-B</fullName>
    </recommendedName>
</protein>
<comment type="function">
    <text evidence="4 5">Plays a role in axon and dendrite arborization during cranial nerve development (PubMed:24044555). Also important for neural crest migration and early development of other anterior structures including eye, brain and cranial cartilage (PubMed:28104388).</text>
</comment>
<comment type="subcellular location">
    <subcellularLocation>
        <location evidence="1">Cytoplasmic vesicle</location>
    </subcellularLocation>
    <subcellularLocation>
        <location evidence="1">Cell projection</location>
        <location evidence="1">Axon</location>
    </subcellularLocation>
    <subcellularLocation>
        <location evidence="1">Cell projection</location>
        <location evidence="1">Dendrite</location>
    </subcellularLocation>
    <text evidence="1">In developing neurons, accumulates in early growth cones and at branching points of axons and dendrites.</text>
</comment>
<comment type="developmental stage">
    <text evidence="4 5">Detected from early embryogenesis onwards (stages 11-35) (PubMed:24044555, PubMed:28104388). Expressed in the mesoderm during gastrulation (PubMed:24044555). Expressed in migrating neural crest cells, where it partially colocalizes with twist1 (PubMed:28104388). As development proceeds, shows marked expression in developing anterior structures including brain, pharyngeal arches, eye (including retina and lens), otic vesicle, heart, pronephros, liver and cranial ganglia (PubMed:24044555, PubMed:28104388).</text>
</comment>
<comment type="disruption phenotype">
    <text evidence="4 5">Morpholino knockdown severely impairs cranial nerve development, with shorter or missing cranial ganglia and reduced nerve arborization (PubMed:24044555). Neural crest migration is impaired, although neural crest induction is not significantly affected (PubMed:28104388). Brain size is reduced and cranial cartilage development is severely disrupted, leading to smaller head size (PubMed:28104388). Eyes are smaller and deformed, with coloboma formation and disrupted retinal lamination (PubMed:28104388). In eye, expression of the genes rax, pax6 and otx2 is reduced (PubMed:28104388). In brain, expression of the genes emx1, pax6, otx2, en2 and egr2 is reduced (PubMed:28104388). Tissues show increased apoptosis and reduced cell proliferation (PubMed:28104388).</text>
</comment>
<comment type="similarity">
    <text evidence="6">Belongs to the N4BP3 family.</text>
</comment>
<keyword id="KW-0966">Cell projection</keyword>
<keyword id="KW-0175">Coiled coil</keyword>
<keyword id="KW-0968">Cytoplasmic vesicle</keyword>
<keyword id="KW-0217">Developmental protein</keyword>
<keyword id="KW-0524">Neurogenesis</keyword>
<keyword id="KW-1185">Reference proteome</keyword>
<dbReference type="EMBL" id="CM004471">
    <property type="protein sequence ID" value="OCT87647.1"/>
    <property type="molecule type" value="Genomic_DNA"/>
</dbReference>
<dbReference type="SMR" id="A0A1L8GUX5"/>
<dbReference type="PaxDb" id="8355-A0A1L8GUX5"/>
<dbReference type="GeneID" id="108713222"/>
<dbReference type="KEGG" id="xla:108713222"/>
<dbReference type="AGR" id="Xenbase:XB-GENE-6486425"/>
<dbReference type="CTD" id="108713222"/>
<dbReference type="Xenbase" id="XB-GENE-6486425">
    <property type="gene designation" value="n4bp3.S"/>
</dbReference>
<dbReference type="OMA" id="FSCKSMA"/>
<dbReference type="OrthoDB" id="10030037at2759"/>
<dbReference type="Proteomes" id="UP000186698">
    <property type="component" value="Chromosome 3S"/>
</dbReference>
<dbReference type="Proteomes" id="UP000694892">
    <property type="component" value="Chromosome 3S"/>
</dbReference>
<dbReference type="Bgee" id="108713222">
    <property type="expression patterns" value="Expressed in heart and 18 other cell types or tissues"/>
</dbReference>
<dbReference type="GO" id="GO:0030424">
    <property type="term" value="C:axon"/>
    <property type="evidence" value="ECO:0007669"/>
    <property type="project" value="UniProtKB-SubCell"/>
</dbReference>
<dbReference type="GO" id="GO:0031410">
    <property type="term" value="C:cytoplasmic vesicle"/>
    <property type="evidence" value="ECO:0000318"/>
    <property type="project" value="GO_Central"/>
</dbReference>
<dbReference type="GO" id="GO:0030425">
    <property type="term" value="C:dendrite"/>
    <property type="evidence" value="ECO:0007669"/>
    <property type="project" value="UniProtKB-SubCell"/>
</dbReference>
<dbReference type="GO" id="GO:0007399">
    <property type="term" value="P:nervous system development"/>
    <property type="evidence" value="ECO:0007669"/>
    <property type="project" value="UniProtKB-KW"/>
</dbReference>
<dbReference type="InterPro" id="IPR033571">
    <property type="entry name" value="N4BP3"/>
</dbReference>
<dbReference type="PANTHER" id="PTHR32274">
    <property type="entry name" value="NEDD4-BINDING PROTEIN 3"/>
    <property type="match status" value="1"/>
</dbReference>
<dbReference type="PANTHER" id="PTHR32274:SF1">
    <property type="entry name" value="NEDD4-BINDING PROTEIN 3"/>
    <property type="match status" value="1"/>
</dbReference>
<dbReference type="Pfam" id="PF06818">
    <property type="entry name" value="Fez1"/>
    <property type="match status" value="2"/>
</dbReference>
<evidence type="ECO:0000250" key="1">
    <source>
        <dbReference type="UniProtKB" id="Q3LUD3"/>
    </source>
</evidence>
<evidence type="ECO:0000255" key="2"/>
<evidence type="ECO:0000256" key="3">
    <source>
        <dbReference type="SAM" id="MobiDB-lite"/>
    </source>
</evidence>
<evidence type="ECO:0000269" key="4">
    <source>
    </source>
</evidence>
<evidence type="ECO:0000269" key="5">
    <source>
    </source>
</evidence>
<evidence type="ECO:0000305" key="6"/>
<evidence type="ECO:0000312" key="7">
    <source>
        <dbReference type="Proteomes" id="UP000186698"/>
    </source>
</evidence>
<feature type="chain" id="PRO_0000441858" description="NEDD4-binding protein 3-B">
    <location>
        <begin position="1"/>
        <end position="573"/>
    </location>
</feature>
<feature type="region of interest" description="Disordered" evidence="3">
    <location>
        <begin position="119"/>
        <end position="138"/>
    </location>
</feature>
<feature type="region of interest" description="Disordered" evidence="3">
    <location>
        <begin position="173"/>
        <end position="220"/>
    </location>
</feature>
<feature type="region of interest" description="Disordered" evidence="3">
    <location>
        <begin position="384"/>
        <end position="405"/>
    </location>
</feature>
<feature type="coiled-coil region" evidence="2">
    <location>
        <begin position="287"/>
        <end position="474"/>
    </location>
</feature>
<feature type="compositionally biased region" description="Basic and acidic residues" evidence="3">
    <location>
        <begin position="125"/>
        <end position="135"/>
    </location>
</feature>
<feature type="compositionally biased region" description="Low complexity" evidence="3">
    <location>
        <begin position="186"/>
        <end position="196"/>
    </location>
</feature>
<feature type="compositionally biased region" description="Polar residues" evidence="3">
    <location>
        <begin position="207"/>
        <end position="220"/>
    </location>
</feature>
<feature type="compositionally biased region" description="Polar residues" evidence="3">
    <location>
        <begin position="392"/>
        <end position="401"/>
    </location>
</feature>
<proteinExistence type="evidence at transcript level"/>
<organism evidence="7">
    <name type="scientific">Xenopus laevis</name>
    <name type="common">African clawed frog</name>
    <dbReference type="NCBI Taxonomy" id="8355"/>
    <lineage>
        <taxon>Eukaryota</taxon>
        <taxon>Metazoa</taxon>
        <taxon>Chordata</taxon>
        <taxon>Craniata</taxon>
        <taxon>Vertebrata</taxon>
        <taxon>Euteleostomi</taxon>
        <taxon>Amphibia</taxon>
        <taxon>Batrachia</taxon>
        <taxon>Anura</taxon>
        <taxon>Pipoidea</taxon>
        <taxon>Pipidae</taxon>
        <taxon>Xenopodinae</taxon>
        <taxon>Xenopus</taxon>
        <taxon>Xenopus</taxon>
    </lineage>
</organism>
<name>N4B3B_XENLA</name>
<sequence length="573" mass="65125">MAAAQTFSANCDPVNFHNLQSYPSESVTYSCKMGNVSSLMEKQDFPNEGFNLDFRPFPEPSCKRGLHQKEFLSYLNITKKEGKNNKKFPSGLGFRREHSLQAEENDYPVFYHKDHRGTEFSKSSLPERGHSDKSRFGPSALKSNVKAFMSIQSLHQSTNKLSKSNGSLNTLGCVGSPPCRGPLQPSNSHSNNPSESGNDEDDDSLSDSKQNSINSLNSYSPSFTVARGQISASLGHINHIGGSLDRASRGLRDTMAGEKGTLSCRNMATLSRLQCSGEPPPPYEYSESVEDVARQLEKRLQEKGMEAQQLRRNASDNDDPFTQVFEDKRRLWMEELDELKQMYMSKLQQISQQALRSQRALQLQLYKVQQEKKRLQEELNSLQGENEELRQKQSQSDNSGPNLEDSKWEISQKAGEISFLKQQLRDSQAEINLKLGEVVSLKVQLREAKALVKEKEKESAELSDCLQALEDVKSQTPVDLPRDSSDTIDVERLRAELMLERRQNEAQILIFETERKVWKEEKDKVLRYQKEIQSSYLEMYQRNQALERQVLELRQGVGQSLSSPASWMDTVET</sequence>